<name>CDPKC_ORYSJ</name>
<evidence type="ECO:0000250" key="1">
    <source>
        <dbReference type="UniProtKB" id="Q06850"/>
    </source>
</evidence>
<evidence type="ECO:0000255" key="2"/>
<evidence type="ECO:0000255" key="3">
    <source>
        <dbReference type="PROSITE-ProRule" id="PRU00159"/>
    </source>
</evidence>
<evidence type="ECO:0000255" key="4">
    <source>
        <dbReference type="PROSITE-ProRule" id="PRU00448"/>
    </source>
</evidence>
<evidence type="ECO:0000256" key="5">
    <source>
        <dbReference type="SAM" id="MobiDB-lite"/>
    </source>
</evidence>
<evidence type="ECO:0000269" key="6">
    <source>
    </source>
</evidence>
<evidence type="ECO:0000269" key="7">
    <source ref="7"/>
</evidence>
<evidence type="ECO:0000303" key="8">
    <source>
    </source>
</evidence>
<evidence type="ECO:0000305" key="9"/>
<evidence type="ECO:0000312" key="10">
    <source>
        <dbReference type="EMBL" id="BAF15462.1"/>
    </source>
</evidence>
<evidence type="ECO:0000312" key="11">
    <source>
        <dbReference type="EMBL" id="CAE01846.2"/>
    </source>
</evidence>
<evidence type="ECO:0000312" key="12">
    <source>
        <dbReference type="EMBL" id="EAZ31624.1"/>
    </source>
</evidence>
<protein>
    <recommendedName>
        <fullName evidence="9">Calcium-dependent protein kinase 12</fullName>
        <shortName evidence="9">OsCDPK12</shortName>
        <shortName evidence="8">OsCPK12</shortName>
        <ecNumber evidence="9">2.7.11.1</ecNumber>
    </recommendedName>
</protein>
<feature type="initiator methionine" description="Removed" evidence="2">
    <location>
        <position position="1"/>
    </location>
</feature>
<feature type="chain" id="PRO_0000437556" description="Calcium-dependent protein kinase 12">
    <location>
        <begin position="2"/>
        <end position="533"/>
    </location>
</feature>
<feature type="domain" description="Protein kinase" evidence="3">
    <location>
        <begin position="91"/>
        <end position="349"/>
    </location>
</feature>
<feature type="domain" description="EF-hand 1" evidence="4">
    <location>
        <begin position="391"/>
        <end position="426"/>
    </location>
</feature>
<feature type="domain" description="EF-hand 2" evidence="4">
    <location>
        <begin position="427"/>
        <end position="462"/>
    </location>
</feature>
<feature type="domain" description="EF-hand 3" evidence="4">
    <location>
        <begin position="463"/>
        <end position="498"/>
    </location>
</feature>
<feature type="domain" description="EF-hand 4" evidence="4">
    <location>
        <begin position="499"/>
        <end position="533"/>
    </location>
</feature>
<feature type="region of interest" description="Disordered" evidence="5">
    <location>
        <begin position="1"/>
        <end position="77"/>
    </location>
</feature>
<feature type="region of interest" description="Autoinhibitory domain" evidence="1">
    <location>
        <begin position="354"/>
        <end position="384"/>
    </location>
</feature>
<feature type="compositionally biased region" description="Basic and acidic residues" evidence="5">
    <location>
        <begin position="26"/>
        <end position="38"/>
    </location>
</feature>
<feature type="compositionally biased region" description="Low complexity" evidence="5">
    <location>
        <begin position="57"/>
        <end position="69"/>
    </location>
</feature>
<feature type="active site" description="Proton acceptor" evidence="3">
    <location>
        <position position="215"/>
    </location>
</feature>
<feature type="binding site" evidence="3">
    <location>
        <begin position="97"/>
        <end position="105"/>
    </location>
    <ligand>
        <name>ATP</name>
        <dbReference type="ChEBI" id="CHEBI:30616"/>
    </ligand>
</feature>
<feature type="binding site" evidence="3">
    <location>
        <position position="120"/>
    </location>
    <ligand>
        <name>ATP</name>
        <dbReference type="ChEBI" id="CHEBI:30616"/>
    </ligand>
</feature>
<feature type="binding site" evidence="4">
    <location>
        <position position="404"/>
    </location>
    <ligand>
        <name>Ca(2+)</name>
        <dbReference type="ChEBI" id="CHEBI:29108"/>
        <label>1</label>
    </ligand>
</feature>
<feature type="binding site" evidence="4">
    <location>
        <position position="406"/>
    </location>
    <ligand>
        <name>Ca(2+)</name>
        <dbReference type="ChEBI" id="CHEBI:29108"/>
        <label>1</label>
    </ligand>
</feature>
<feature type="binding site" evidence="4">
    <location>
        <position position="408"/>
    </location>
    <ligand>
        <name>Ca(2+)</name>
        <dbReference type="ChEBI" id="CHEBI:29108"/>
        <label>1</label>
    </ligand>
</feature>
<feature type="binding site" evidence="4">
    <location>
        <position position="410"/>
    </location>
    <ligand>
        <name>Ca(2+)</name>
        <dbReference type="ChEBI" id="CHEBI:29108"/>
        <label>1</label>
    </ligand>
</feature>
<feature type="binding site" evidence="4">
    <location>
        <position position="415"/>
    </location>
    <ligand>
        <name>Ca(2+)</name>
        <dbReference type="ChEBI" id="CHEBI:29108"/>
        <label>1</label>
    </ligand>
</feature>
<feature type="binding site" evidence="4">
    <location>
        <position position="440"/>
    </location>
    <ligand>
        <name>Ca(2+)</name>
        <dbReference type="ChEBI" id="CHEBI:29108"/>
        <label>2</label>
    </ligand>
</feature>
<feature type="binding site" evidence="4">
    <location>
        <position position="442"/>
    </location>
    <ligand>
        <name>Ca(2+)</name>
        <dbReference type="ChEBI" id="CHEBI:29108"/>
        <label>2</label>
    </ligand>
</feature>
<feature type="binding site" evidence="4">
    <location>
        <position position="444"/>
    </location>
    <ligand>
        <name>Ca(2+)</name>
        <dbReference type="ChEBI" id="CHEBI:29108"/>
        <label>2</label>
    </ligand>
</feature>
<feature type="binding site" evidence="4">
    <location>
        <position position="446"/>
    </location>
    <ligand>
        <name>Ca(2+)</name>
        <dbReference type="ChEBI" id="CHEBI:29108"/>
        <label>2</label>
    </ligand>
</feature>
<feature type="binding site" evidence="4">
    <location>
        <position position="451"/>
    </location>
    <ligand>
        <name>Ca(2+)</name>
        <dbReference type="ChEBI" id="CHEBI:29108"/>
        <label>2</label>
    </ligand>
</feature>
<feature type="binding site" evidence="4">
    <location>
        <position position="476"/>
    </location>
    <ligand>
        <name>Ca(2+)</name>
        <dbReference type="ChEBI" id="CHEBI:29108"/>
        <label>3</label>
    </ligand>
</feature>
<feature type="binding site" evidence="4">
    <location>
        <position position="478"/>
    </location>
    <ligand>
        <name>Ca(2+)</name>
        <dbReference type="ChEBI" id="CHEBI:29108"/>
        <label>3</label>
    </ligand>
</feature>
<feature type="binding site" evidence="4">
    <location>
        <position position="480"/>
    </location>
    <ligand>
        <name>Ca(2+)</name>
        <dbReference type="ChEBI" id="CHEBI:29108"/>
        <label>3</label>
    </ligand>
</feature>
<feature type="binding site" evidence="4">
    <location>
        <position position="482"/>
    </location>
    <ligand>
        <name>Ca(2+)</name>
        <dbReference type="ChEBI" id="CHEBI:29108"/>
        <label>3</label>
    </ligand>
</feature>
<feature type="binding site" evidence="4">
    <location>
        <position position="487"/>
    </location>
    <ligand>
        <name>Ca(2+)</name>
        <dbReference type="ChEBI" id="CHEBI:29108"/>
        <label>3</label>
    </ligand>
</feature>
<feature type="binding site" evidence="4">
    <location>
        <position position="511"/>
    </location>
    <ligand>
        <name>Ca(2+)</name>
        <dbReference type="ChEBI" id="CHEBI:29108"/>
        <label>4</label>
    </ligand>
</feature>
<feature type="binding site" evidence="4">
    <location>
        <position position="513"/>
    </location>
    <ligand>
        <name>Ca(2+)</name>
        <dbReference type="ChEBI" id="CHEBI:29108"/>
        <label>4</label>
    </ligand>
</feature>
<feature type="binding site" evidence="4">
    <location>
        <position position="515"/>
    </location>
    <ligand>
        <name>Ca(2+)</name>
        <dbReference type="ChEBI" id="CHEBI:29108"/>
        <label>4</label>
    </ligand>
</feature>
<feature type="binding site" evidence="4">
    <location>
        <position position="517"/>
    </location>
    <ligand>
        <name>Ca(2+)</name>
        <dbReference type="ChEBI" id="CHEBI:29108"/>
        <label>4</label>
    </ligand>
</feature>
<feature type="binding site" evidence="4">
    <location>
        <position position="522"/>
    </location>
    <ligand>
        <name>Ca(2+)</name>
        <dbReference type="ChEBI" id="CHEBI:29108"/>
        <label>4</label>
    </ligand>
</feature>
<feature type="lipid moiety-binding region" description="N-myristoyl glycine" evidence="2">
    <location>
        <position position="2"/>
    </location>
</feature>
<organism>
    <name type="scientific">Oryza sativa subsp. japonica</name>
    <name type="common">Rice</name>
    <dbReference type="NCBI Taxonomy" id="39947"/>
    <lineage>
        <taxon>Eukaryota</taxon>
        <taxon>Viridiplantae</taxon>
        <taxon>Streptophyta</taxon>
        <taxon>Embryophyta</taxon>
        <taxon>Tracheophyta</taxon>
        <taxon>Spermatophyta</taxon>
        <taxon>Magnoliopsida</taxon>
        <taxon>Liliopsida</taxon>
        <taxon>Poales</taxon>
        <taxon>Poaceae</taxon>
        <taxon>BOP clade</taxon>
        <taxon>Oryzoideae</taxon>
        <taxon>Oryzeae</taxon>
        <taxon>Oryzinae</taxon>
        <taxon>Oryza</taxon>
        <taxon>Oryza sativa</taxon>
    </lineage>
</organism>
<keyword id="KW-0067">ATP-binding</keyword>
<keyword id="KW-0106">Calcium</keyword>
<keyword id="KW-0418">Kinase</keyword>
<keyword id="KW-0449">Lipoprotein</keyword>
<keyword id="KW-0472">Membrane</keyword>
<keyword id="KW-0479">Metal-binding</keyword>
<keyword id="KW-0519">Myristate</keyword>
<keyword id="KW-0547">Nucleotide-binding</keyword>
<keyword id="KW-1185">Reference proteome</keyword>
<keyword id="KW-0677">Repeat</keyword>
<keyword id="KW-0723">Serine/threonine-protein kinase</keyword>
<keyword id="KW-0346">Stress response</keyword>
<keyword id="KW-0808">Transferase</keyword>
<proteinExistence type="evidence at transcript level"/>
<accession>Q7XSQ5</accession>
<gene>
    <name evidence="8" type="primary">CPK12</name>
    <name evidence="10" type="ordered locus">Os04g0560600</name>
    <name evidence="9" type="ordered locus">LOC_Os04g47300</name>
    <name evidence="12" type="ORF">OsJ_15768</name>
    <name evidence="11" type="ORF">OSJNBa0084K11.9</name>
</gene>
<reference key="1">
    <citation type="journal article" date="2002" name="Nature">
        <title>Sequence and analysis of rice chromosome 4.</title>
        <authorList>
            <person name="Feng Q."/>
            <person name="Zhang Y."/>
            <person name="Hao P."/>
            <person name="Wang S."/>
            <person name="Fu G."/>
            <person name="Huang Y."/>
            <person name="Li Y."/>
            <person name="Zhu J."/>
            <person name="Liu Y."/>
            <person name="Hu X."/>
            <person name="Jia P."/>
            <person name="Zhang Y."/>
            <person name="Zhao Q."/>
            <person name="Ying K."/>
            <person name="Yu S."/>
            <person name="Tang Y."/>
            <person name="Weng Q."/>
            <person name="Zhang L."/>
            <person name="Lu Y."/>
            <person name="Mu J."/>
            <person name="Lu Y."/>
            <person name="Zhang L.S."/>
            <person name="Yu Z."/>
            <person name="Fan D."/>
            <person name="Liu X."/>
            <person name="Lu T."/>
            <person name="Li C."/>
            <person name="Wu Y."/>
            <person name="Sun T."/>
            <person name="Lei H."/>
            <person name="Li T."/>
            <person name="Hu H."/>
            <person name="Guan J."/>
            <person name="Wu M."/>
            <person name="Zhang R."/>
            <person name="Zhou B."/>
            <person name="Chen Z."/>
            <person name="Chen L."/>
            <person name="Jin Z."/>
            <person name="Wang R."/>
            <person name="Yin H."/>
            <person name="Cai Z."/>
            <person name="Ren S."/>
            <person name="Lv G."/>
            <person name="Gu W."/>
            <person name="Zhu G."/>
            <person name="Tu Y."/>
            <person name="Jia J."/>
            <person name="Zhang Y."/>
            <person name="Chen J."/>
            <person name="Kang H."/>
            <person name="Chen X."/>
            <person name="Shao C."/>
            <person name="Sun Y."/>
            <person name="Hu Q."/>
            <person name="Zhang X."/>
            <person name="Zhang W."/>
            <person name="Wang L."/>
            <person name="Ding C."/>
            <person name="Sheng H."/>
            <person name="Gu J."/>
            <person name="Chen S."/>
            <person name="Ni L."/>
            <person name="Zhu F."/>
            <person name="Chen W."/>
            <person name="Lan L."/>
            <person name="Lai Y."/>
            <person name="Cheng Z."/>
            <person name="Gu M."/>
            <person name="Jiang J."/>
            <person name="Li J."/>
            <person name="Hong G."/>
            <person name="Xue Y."/>
            <person name="Han B."/>
        </authorList>
    </citation>
    <scope>NUCLEOTIDE SEQUENCE [LARGE SCALE GENOMIC DNA]</scope>
    <source>
        <strain>cv. Nipponbare</strain>
    </source>
</reference>
<reference key="2">
    <citation type="journal article" date="2005" name="Nature">
        <title>The map-based sequence of the rice genome.</title>
        <authorList>
            <consortium name="International rice genome sequencing project (IRGSP)"/>
        </authorList>
    </citation>
    <scope>NUCLEOTIDE SEQUENCE [LARGE SCALE GENOMIC DNA]</scope>
    <source>
        <strain>cv. Nipponbare</strain>
    </source>
</reference>
<reference key="3">
    <citation type="journal article" date="2008" name="Nucleic Acids Res.">
        <title>The rice annotation project database (RAP-DB): 2008 update.</title>
        <authorList>
            <consortium name="The rice annotation project (RAP)"/>
        </authorList>
    </citation>
    <scope>GENOME REANNOTATION</scope>
    <source>
        <strain>cv. Nipponbare</strain>
    </source>
</reference>
<reference key="4">
    <citation type="journal article" date="2013" name="Rice">
        <title>Improvement of the Oryza sativa Nipponbare reference genome using next generation sequence and optical map data.</title>
        <authorList>
            <person name="Kawahara Y."/>
            <person name="de la Bastide M."/>
            <person name="Hamilton J.P."/>
            <person name="Kanamori H."/>
            <person name="McCombie W.R."/>
            <person name="Ouyang S."/>
            <person name="Schwartz D.C."/>
            <person name="Tanaka T."/>
            <person name="Wu J."/>
            <person name="Zhou S."/>
            <person name="Childs K.L."/>
            <person name="Davidson R.M."/>
            <person name="Lin H."/>
            <person name="Quesada-Ocampo L."/>
            <person name="Vaillancourt B."/>
            <person name="Sakai H."/>
            <person name="Lee S.S."/>
            <person name="Kim J."/>
            <person name="Numa H."/>
            <person name="Itoh T."/>
            <person name="Buell C.R."/>
            <person name="Matsumoto T."/>
        </authorList>
    </citation>
    <scope>GENOME REANNOTATION</scope>
    <source>
        <strain>cv. Nipponbare</strain>
    </source>
</reference>
<reference key="5">
    <citation type="journal article" date="2005" name="PLoS Biol.">
        <title>The genomes of Oryza sativa: a history of duplications.</title>
        <authorList>
            <person name="Yu J."/>
            <person name="Wang J."/>
            <person name="Lin W."/>
            <person name="Li S."/>
            <person name="Li H."/>
            <person name="Zhou J."/>
            <person name="Ni P."/>
            <person name="Dong W."/>
            <person name="Hu S."/>
            <person name="Zeng C."/>
            <person name="Zhang J."/>
            <person name="Zhang Y."/>
            <person name="Li R."/>
            <person name="Xu Z."/>
            <person name="Li S."/>
            <person name="Li X."/>
            <person name="Zheng H."/>
            <person name="Cong L."/>
            <person name="Lin L."/>
            <person name="Yin J."/>
            <person name="Geng J."/>
            <person name="Li G."/>
            <person name="Shi J."/>
            <person name="Liu J."/>
            <person name="Lv H."/>
            <person name="Li J."/>
            <person name="Wang J."/>
            <person name="Deng Y."/>
            <person name="Ran L."/>
            <person name="Shi X."/>
            <person name="Wang X."/>
            <person name="Wu Q."/>
            <person name="Li C."/>
            <person name="Ren X."/>
            <person name="Wang J."/>
            <person name="Wang X."/>
            <person name="Li D."/>
            <person name="Liu D."/>
            <person name="Zhang X."/>
            <person name="Ji Z."/>
            <person name="Zhao W."/>
            <person name="Sun Y."/>
            <person name="Zhang Z."/>
            <person name="Bao J."/>
            <person name="Han Y."/>
            <person name="Dong L."/>
            <person name="Ji J."/>
            <person name="Chen P."/>
            <person name="Wu S."/>
            <person name="Liu J."/>
            <person name="Xiao Y."/>
            <person name="Bu D."/>
            <person name="Tan J."/>
            <person name="Yang L."/>
            <person name="Ye C."/>
            <person name="Zhang J."/>
            <person name="Xu J."/>
            <person name="Zhou Y."/>
            <person name="Yu Y."/>
            <person name="Zhang B."/>
            <person name="Zhuang S."/>
            <person name="Wei H."/>
            <person name="Liu B."/>
            <person name="Lei M."/>
            <person name="Yu H."/>
            <person name="Li Y."/>
            <person name="Xu H."/>
            <person name="Wei S."/>
            <person name="He X."/>
            <person name="Fang L."/>
            <person name="Zhang Z."/>
            <person name="Zhang Y."/>
            <person name="Huang X."/>
            <person name="Su Z."/>
            <person name="Tong W."/>
            <person name="Li J."/>
            <person name="Tong Z."/>
            <person name="Li S."/>
            <person name="Ye J."/>
            <person name="Wang L."/>
            <person name="Fang L."/>
            <person name="Lei T."/>
            <person name="Chen C.-S."/>
            <person name="Chen H.-C."/>
            <person name="Xu Z."/>
            <person name="Li H."/>
            <person name="Huang H."/>
            <person name="Zhang F."/>
            <person name="Xu H."/>
            <person name="Li N."/>
            <person name="Zhao C."/>
            <person name="Li S."/>
            <person name="Dong L."/>
            <person name="Huang Y."/>
            <person name="Li L."/>
            <person name="Xi Y."/>
            <person name="Qi Q."/>
            <person name="Li W."/>
            <person name="Zhang B."/>
            <person name="Hu W."/>
            <person name="Zhang Y."/>
            <person name="Tian X."/>
            <person name="Jiao Y."/>
            <person name="Liang X."/>
            <person name="Jin J."/>
            <person name="Gao L."/>
            <person name="Zheng W."/>
            <person name="Hao B."/>
            <person name="Liu S.-M."/>
            <person name="Wang W."/>
            <person name="Yuan L."/>
            <person name="Cao M."/>
            <person name="McDermott J."/>
            <person name="Samudrala R."/>
            <person name="Wang J."/>
            <person name="Wong G.K.-S."/>
            <person name="Yang H."/>
        </authorList>
    </citation>
    <scope>NUCLEOTIDE SEQUENCE [LARGE SCALE GENOMIC DNA]</scope>
    <source>
        <strain>cv. Nipponbare</strain>
    </source>
</reference>
<reference key="6">
    <citation type="journal article" date="2005" name="Plant Cell Physiol.">
        <title>Genome-wide identification of the rice calcium-dependent protein kinase and its closely related kinase gene families: comprehensive analysis of the CDPKs gene family in rice.</title>
        <authorList>
            <person name="Asano T."/>
            <person name="Tanaka N."/>
            <person name="Yang G."/>
            <person name="Hayashi N."/>
            <person name="Komatsu S."/>
        </authorList>
    </citation>
    <scope>GENE FAMILY</scope>
    <scope>NOMENCLATURE</scope>
</reference>
<reference key="7">
    <citation type="journal article" date="2010" name="Plant Biotechnol.">
        <title>Overexpression of a calcium-dependent protein kinase gene enhances growth of rice under low-nitrogen conditions.</title>
        <authorList>
            <person name="Asano T."/>
            <person name="Wakayama M."/>
            <person name="Aoki N."/>
            <person name="Komatsu S."/>
            <person name="Ichikawa H."/>
            <person name="Hirochika H."/>
            <person name="Ohsugi R."/>
        </authorList>
    </citation>
    <scope>FUNCTION</scope>
    <scope>TISSUE SPECIFICITY</scope>
</reference>
<reference key="8">
    <citation type="journal article" date="2012" name="Plant J.">
        <title>A rice calcium-dependent protein kinase OsCPK12 oppositely modulates salt-stress tolerance and blast disease resistance.</title>
        <authorList>
            <person name="Asano T."/>
            <person name="Hayashi N."/>
            <person name="Kobayashi M."/>
            <person name="Aoki N."/>
            <person name="Miyao A."/>
            <person name="Mitsuhara I."/>
            <person name="Ichikawa H."/>
            <person name="Komatsu S."/>
            <person name="Hirochika H."/>
            <person name="Kikuchi S."/>
            <person name="Ohsugi R."/>
        </authorList>
    </citation>
    <scope>FUNCTION</scope>
    <scope>TISSUE SPECIFICITY</scope>
</reference>
<dbReference type="EC" id="2.7.11.1" evidence="9"/>
<dbReference type="EMBL" id="AL606687">
    <property type="protein sequence ID" value="CAE01846.2"/>
    <property type="molecule type" value="Genomic_DNA"/>
</dbReference>
<dbReference type="EMBL" id="AP008210">
    <property type="protein sequence ID" value="BAF15462.1"/>
    <property type="molecule type" value="Genomic_DNA"/>
</dbReference>
<dbReference type="EMBL" id="AP014960">
    <property type="protein sequence ID" value="BAS90471.1"/>
    <property type="molecule type" value="Genomic_DNA"/>
</dbReference>
<dbReference type="EMBL" id="CM000141">
    <property type="protein sequence ID" value="EAZ31624.1"/>
    <property type="molecule type" value="Genomic_DNA"/>
</dbReference>
<dbReference type="RefSeq" id="XP_015635961.1">
    <property type="nucleotide sequence ID" value="XM_015780475.1"/>
</dbReference>
<dbReference type="SMR" id="Q7XSQ5"/>
<dbReference type="FunCoup" id="Q7XSQ5">
    <property type="interactions" value="1664"/>
</dbReference>
<dbReference type="STRING" id="39947.Q7XSQ5"/>
<dbReference type="PaxDb" id="39947-Q7XSQ5"/>
<dbReference type="EnsemblPlants" id="Os04t0560600-01">
    <property type="protein sequence ID" value="Os04t0560600-01"/>
    <property type="gene ID" value="Os04g0560600"/>
</dbReference>
<dbReference type="Gramene" id="Os04t0560600-01">
    <property type="protein sequence ID" value="Os04t0560600-01"/>
    <property type="gene ID" value="Os04g0560600"/>
</dbReference>
<dbReference type="KEGG" id="dosa:Os04g0560600"/>
<dbReference type="eggNOG" id="KOG0032">
    <property type="taxonomic scope" value="Eukaryota"/>
</dbReference>
<dbReference type="HOGENOM" id="CLU_000288_37_4_1"/>
<dbReference type="InParanoid" id="Q7XSQ5"/>
<dbReference type="OMA" id="LETEDWQ"/>
<dbReference type="OrthoDB" id="40902at2759"/>
<dbReference type="Proteomes" id="UP000000763">
    <property type="component" value="Chromosome 4"/>
</dbReference>
<dbReference type="Proteomes" id="UP000007752">
    <property type="component" value="Chromosome 4"/>
</dbReference>
<dbReference type="Proteomes" id="UP000059680">
    <property type="component" value="Chromosome 4"/>
</dbReference>
<dbReference type="GO" id="GO:0005737">
    <property type="term" value="C:cytoplasm"/>
    <property type="evidence" value="ECO:0000318"/>
    <property type="project" value="GO_Central"/>
</dbReference>
<dbReference type="GO" id="GO:0016020">
    <property type="term" value="C:membrane"/>
    <property type="evidence" value="ECO:0007669"/>
    <property type="project" value="UniProtKB-SubCell"/>
</dbReference>
<dbReference type="GO" id="GO:0005634">
    <property type="term" value="C:nucleus"/>
    <property type="evidence" value="ECO:0000318"/>
    <property type="project" value="GO_Central"/>
</dbReference>
<dbReference type="GO" id="GO:0005524">
    <property type="term" value="F:ATP binding"/>
    <property type="evidence" value="ECO:0007669"/>
    <property type="project" value="UniProtKB-KW"/>
</dbReference>
<dbReference type="GO" id="GO:0005509">
    <property type="term" value="F:calcium ion binding"/>
    <property type="evidence" value="ECO:0007669"/>
    <property type="project" value="InterPro"/>
</dbReference>
<dbReference type="GO" id="GO:0009931">
    <property type="term" value="F:calcium-dependent protein serine/threonine kinase activity"/>
    <property type="evidence" value="ECO:0000318"/>
    <property type="project" value="GO_Central"/>
</dbReference>
<dbReference type="GO" id="GO:0004683">
    <property type="term" value="F:calcium/calmodulin-dependent protein kinase activity"/>
    <property type="evidence" value="ECO:0000318"/>
    <property type="project" value="GO_Central"/>
</dbReference>
<dbReference type="GO" id="GO:0005516">
    <property type="term" value="F:calmodulin binding"/>
    <property type="evidence" value="ECO:0000318"/>
    <property type="project" value="GO_Central"/>
</dbReference>
<dbReference type="GO" id="GO:0106310">
    <property type="term" value="F:protein serine kinase activity"/>
    <property type="evidence" value="ECO:0007669"/>
    <property type="project" value="RHEA"/>
</dbReference>
<dbReference type="GO" id="GO:0050832">
    <property type="term" value="P:defense response to fungus"/>
    <property type="evidence" value="ECO:0000315"/>
    <property type="project" value="UniProtKB"/>
</dbReference>
<dbReference type="GO" id="GO:0035556">
    <property type="term" value="P:intracellular signal transduction"/>
    <property type="evidence" value="ECO:0000318"/>
    <property type="project" value="GO_Central"/>
</dbReference>
<dbReference type="GO" id="GO:1901002">
    <property type="term" value="P:positive regulation of response to salt stress"/>
    <property type="evidence" value="ECO:0000315"/>
    <property type="project" value="UniProtKB"/>
</dbReference>
<dbReference type="CDD" id="cd05117">
    <property type="entry name" value="STKc_CAMK"/>
    <property type="match status" value="1"/>
</dbReference>
<dbReference type="FunFam" id="1.10.238.10:FF:000015">
    <property type="entry name" value="Calcium-dependent protein kinase 1"/>
    <property type="match status" value="1"/>
</dbReference>
<dbReference type="FunFam" id="3.30.200.20:FF:000004">
    <property type="entry name" value="Calcium-dependent protein kinase 1"/>
    <property type="match status" value="1"/>
</dbReference>
<dbReference type="FunFam" id="1.10.510.10:FF:000056">
    <property type="entry name" value="calcium-dependent protein kinase 1"/>
    <property type="match status" value="1"/>
</dbReference>
<dbReference type="Gene3D" id="1.10.238.10">
    <property type="entry name" value="EF-hand"/>
    <property type="match status" value="1"/>
</dbReference>
<dbReference type="Gene3D" id="3.30.200.20">
    <property type="entry name" value="Phosphorylase Kinase, domain 1"/>
    <property type="match status" value="1"/>
</dbReference>
<dbReference type="Gene3D" id="1.10.510.10">
    <property type="entry name" value="Transferase(Phosphotransferase) domain 1"/>
    <property type="match status" value="1"/>
</dbReference>
<dbReference type="InterPro" id="IPR050205">
    <property type="entry name" value="CDPK_Ser/Thr_kinases"/>
</dbReference>
<dbReference type="InterPro" id="IPR011992">
    <property type="entry name" value="EF-hand-dom_pair"/>
</dbReference>
<dbReference type="InterPro" id="IPR018247">
    <property type="entry name" value="EF_Hand_1_Ca_BS"/>
</dbReference>
<dbReference type="InterPro" id="IPR002048">
    <property type="entry name" value="EF_hand_dom"/>
</dbReference>
<dbReference type="InterPro" id="IPR011009">
    <property type="entry name" value="Kinase-like_dom_sf"/>
</dbReference>
<dbReference type="InterPro" id="IPR000719">
    <property type="entry name" value="Prot_kinase_dom"/>
</dbReference>
<dbReference type="InterPro" id="IPR017441">
    <property type="entry name" value="Protein_kinase_ATP_BS"/>
</dbReference>
<dbReference type="InterPro" id="IPR008271">
    <property type="entry name" value="Ser/Thr_kinase_AS"/>
</dbReference>
<dbReference type="PANTHER" id="PTHR24349">
    <property type="entry name" value="SERINE/THREONINE-PROTEIN KINASE"/>
    <property type="match status" value="1"/>
</dbReference>
<dbReference type="Pfam" id="PF13499">
    <property type="entry name" value="EF-hand_7"/>
    <property type="match status" value="2"/>
</dbReference>
<dbReference type="Pfam" id="PF00069">
    <property type="entry name" value="Pkinase"/>
    <property type="match status" value="1"/>
</dbReference>
<dbReference type="SMART" id="SM00054">
    <property type="entry name" value="EFh"/>
    <property type="match status" value="4"/>
</dbReference>
<dbReference type="SMART" id="SM00220">
    <property type="entry name" value="S_TKc"/>
    <property type="match status" value="1"/>
</dbReference>
<dbReference type="SUPFAM" id="SSF47473">
    <property type="entry name" value="EF-hand"/>
    <property type="match status" value="1"/>
</dbReference>
<dbReference type="SUPFAM" id="SSF56112">
    <property type="entry name" value="Protein kinase-like (PK-like)"/>
    <property type="match status" value="1"/>
</dbReference>
<dbReference type="PROSITE" id="PS00018">
    <property type="entry name" value="EF_HAND_1"/>
    <property type="match status" value="4"/>
</dbReference>
<dbReference type="PROSITE" id="PS50222">
    <property type="entry name" value="EF_HAND_2"/>
    <property type="match status" value="4"/>
</dbReference>
<dbReference type="PROSITE" id="PS00107">
    <property type="entry name" value="PROTEIN_KINASE_ATP"/>
    <property type="match status" value="1"/>
</dbReference>
<dbReference type="PROSITE" id="PS50011">
    <property type="entry name" value="PROTEIN_KINASE_DOM"/>
    <property type="match status" value="1"/>
</dbReference>
<dbReference type="PROSITE" id="PS00108">
    <property type="entry name" value="PROTEIN_KINASE_ST"/>
    <property type="match status" value="1"/>
</dbReference>
<comment type="function">
    <text evidence="1 6 7">May play a role in signal transduction pathways that involve calcium as a second messenger (By similarity). Functions in signal transduction pathways that positively regulate responses to low-nitrogen (Ref.7). Functions in multiple signaling pathways, positively regulating salt tolerance and negatively modulating rice blast fungus resistance. May promote tolerance to salt stress by negatively regulating NADPH oxidase and positively regulating reactive oxygen species (ROS) scavengers (PubMed:21883553).</text>
</comment>
<comment type="catalytic activity">
    <reaction evidence="9">
        <text>L-seryl-[protein] + ATP = O-phospho-L-seryl-[protein] + ADP + H(+)</text>
        <dbReference type="Rhea" id="RHEA:17989"/>
        <dbReference type="Rhea" id="RHEA-COMP:9863"/>
        <dbReference type="Rhea" id="RHEA-COMP:11604"/>
        <dbReference type="ChEBI" id="CHEBI:15378"/>
        <dbReference type="ChEBI" id="CHEBI:29999"/>
        <dbReference type="ChEBI" id="CHEBI:30616"/>
        <dbReference type="ChEBI" id="CHEBI:83421"/>
        <dbReference type="ChEBI" id="CHEBI:456216"/>
        <dbReference type="EC" id="2.7.11.1"/>
    </reaction>
</comment>
<comment type="catalytic activity">
    <reaction evidence="9">
        <text>L-threonyl-[protein] + ATP = O-phospho-L-threonyl-[protein] + ADP + H(+)</text>
        <dbReference type="Rhea" id="RHEA:46608"/>
        <dbReference type="Rhea" id="RHEA-COMP:11060"/>
        <dbReference type="Rhea" id="RHEA-COMP:11605"/>
        <dbReference type="ChEBI" id="CHEBI:15378"/>
        <dbReference type="ChEBI" id="CHEBI:30013"/>
        <dbReference type="ChEBI" id="CHEBI:30616"/>
        <dbReference type="ChEBI" id="CHEBI:61977"/>
        <dbReference type="ChEBI" id="CHEBI:456216"/>
        <dbReference type="EC" id="2.7.11.1"/>
    </reaction>
</comment>
<comment type="activity regulation">
    <text evidence="1">Activated by calcium. Autophosphorylation may play an important role in the regulation of the kinase activity.</text>
</comment>
<comment type="subcellular location">
    <subcellularLocation>
        <location evidence="9">Membrane</location>
        <topology evidence="9">Lipid-anchor</topology>
    </subcellularLocation>
</comment>
<comment type="tissue specificity">
    <text evidence="6 7">Expressed in roots, leaf blades and developing seeds (Ref.7). Expressed in vascular tissues of roots and leaf blades. Expressed in the phloem tissue of the large vascular bundle in leaf blades (PubMed:21883553).</text>
</comment>
<comment type="domain">
    <text evidence="1">There are 3 contiguous domains conserved in the CDPK subfamily: a kinase domain, an autoinhibitory (junction) domain and a calmodulin-like domain. The autoinhibitory domain (354-384) inactivates kinase activity under calcium-free conditions.</text>
</comment>
<comment type="miscellaneous">
    <text evidence="6 7">Plants over-expressing CPK12 show enhanced tolerance to low nitrogen stress (Ref.7). Plants over-expressing CPK12 show increased tolerance to salt stress, increased sensitivity to abscisic acid (ABA) and increased susceptibility to rice blast fungus (M.oryzae) (PubMed:21883553).</text>
</comment>
<comment type="similarity">
    <text evidence="9">Belongs to the protein kinase superfamily. Ser/Thr protein kinase family. CDPK subfamily.</text>
</comment>
<sequence>MGNCFTKTYEIPITSGTMRRPASTAERSKARGGDEPGTWRRPSFPRHGAPPHRPPTGSSSAAGALSRRASGGGGEMGPVLQRAMVSVRSLYQLDRKLGSGQFGTTYLCTERATGNRYACKSVSKRKLVRRTDVDDVRREITILQHLSGQPNIAEFRGAYEDNDHVHLVMEFCSGGELFDRITAKGSYSERQAAAVCRDILTVVHVCHFMGVIHRDLKPENFLLASADDDAPLKAIDFGLSVFIEEGKVYKDIVGSAYYVAPEVLQRNYGKEADIWSAGVILYILLCGTPPFWAETEKGIFDAILVNQVDFSTSPWPSISESAKDLIRQMLHRDPQKRITASQALEHRWLKEGGASDRPIDSAVLSRMKQFKAMNKLKQLALKVIAENLSPEEIKGLKQMFNNMDTDRSGTITVEELKVGLTKLGSRISEAEVQKLMEAVDVDKSGSIDYSEFLTAMINKHKLEKEEDLLRAFQHFDKDNSGYITRDELEQAMAEYGMGDEANIKQVLDEVDKDKDGRIDYEEFVEMMRKGIQT</sequence>